<accession>O64519</accession>
<proteinExistence type="evidence at protein level"/>
<name>MCA6_ARATH</name>
<gene>
    <name type="primary">AMC6</name>
    <name type="synonym">AMC5</name>
    <name type="synonym">MCP2C</name>
    <name type="ordered locus">At1g79320</name>
    <name type="ORF">YUP8H12R.6</name>
</gene>
<organism>
    <name type="scientific">Arabidopsis thaliana</name>
    <name type="common">Mouse-ear cress</name>
    <dbReference type="NCBI Taxonomy" id="3702"/>
    <lineage>
        <taxon>Eukaryota</taxon>
        <taxon>Viridiplantae</taxon>
        <taxon>Streptophyta</taxon>
        <taxon>Embryophyta</taxon>
        <taxon>Tracheophyta</taxon>
        <taxon>Spermatophyta</taxon>
        <taxon>Magnoliopsida</taxon>
        <taxon>eudicotyledons</taxon>
        <taxon>Gunneridae</taxon>
        <taxon>Pentapetalae</taxon>
        <taxon>rosids</taxon>
        <taxon>malvids</taxon>
        <taxon>Brassicales</taxon>
        <taxon>Brassicaceae</taxon>
        <taxon>Camelineae</taxon>
        <taxon>Arabidopsis</taxon>
    </lineage>
</organism>
<keyword id="KW-0068">Autocatalytic cleavage</keyword>
<keyword id="KW-0378">Hydrolase</keyword>
<keyword id="KW-0645">Protease</keyword>
<keyword id="KW-1185">Reference proteome</keyword>
<keyword id="KW-0702">S-nitrosylation</keyword>
<keyword id="KW-0788">Thiol protease</keyword>
<reference key="1">
    <citation type="journal article" date="2004" name="J. Biol. Chem.">
        <title>Type II metacaspases Atmc4 and Atmc9 of Arabidopsis thaliana cleave substrates after arginine and lysine.</title>
        <authorList>
            <person name="Vercammen D."/>
            <person name="van de Cotte B."/>
            <person name="De Jaeger G."/>
            <person name="Eeckhout D."/>
            <person name="Casteels P."/>
            <person name="Vandepoele K."/>
            <person name="Vandenberghe I."/>
            <person name="van Beeumen J."/>
            <person name="Inze D."/>
            <person name="van Breusegem F."/>
        </authorList>
    </citation>
    <scope>NUCLEOTIDE SEQUENCE [MRNA]</scope>
    <scope>AUTOCATALYTIC CLEAVAGE</scope>
    <scope>GENE FAMILY</scope>
    <scope>NOMENCLATURE</scope>
</reference>
<reference key="2">
    <citation type="submission" date="2003-06" db="EMBL/GenBank/DDBJ databases">
        <title>Characterization of metacaspases.</title>
        <authorList>
            <person name="Ikeda Y."/>
            <person name="Krishnamurthy N."/>
            <person name="Chua N.-H."/>
        </authorList>
    </citation>
    <scope>NUCLEOTIDE SEQUENCE [MRNA]</scope>
</reference>
<reference key="3">
    <citation type="journal article" date="2000" name="Nature">
        <title>Sequence and analysis of chromosome 1 of the plant Arabidopsis thaliana.</title>
        <authorList>
            <person name="Theologis A."/>
            <person name="Ecker J.R."/>
            <person name="Palm C.J."/>
            <person name="Federspiel N.A."/>
            <person name="Kaul S."/>
            <person name="White O."/>
            <person name="Alonso J."/>
            <person name="Altafi H."/>
            <person name="Araujo R."/>
            <person name="Bowman C.L."/>
            <person name="Brooks S.Y."/>
            <person name="Buehler E."/>
            <person name="Chan A."/>
            <person name="Chao Q."/>
            <person name="Chen H."/>
            <person name="Cheuk R.F."/>
            <person name="Chin C.W."/>
            <person name="Chung M.K."/>
            <person name="Conn L."/>
            <person name="Conway A.B."/>
            <person name="Conway A.R."/>
            <person name="Creasy T.H."/>
            <person name="Dewar K."/>
            <person name="Dunn P."/>
            <person name="Etgu P."/>
            <person name="Feldblyum T.V."/>
            <person name="Feng J.-D."/>
            <person name="Fong B."/>
            <person name="Fujii C.Y."/>
            <person name="Gill J.E."/>
            <person name="Goldsmith A.D."/>
            <person name="Haas B."/>
            <person name="Hansen N.F."/>
            <person name="Hughes B."/>
            <person name="Huizar L."/>
            <person name="Hunter J.L."/>
            <person name="Jenkins J."/>
            <person name="Johnson-Hopson C."/>
            <person name="Khan S."/>
            <person name="Khaykin E."/>
            <person name="Kim C.J."/>
            <person name="Koo H.L."/>
            <person name="Kremenetskaia I."/>
            <person name="Kurtz D.B."/>
            <person name="Kwan A."/>
            <person name="Lam B."/>
            <person name="Langin-Hooper S."/>
            <person name="Lee A."/>
            <person name="Lee J.M."/>
            <person name="Lenz C.A."/>
            <person name="Li J.H."/>
            <person name="Li Y.-P."/>
            <person name="Lin X."/>
            <person name="Liu S.X."/>
            <person name="Liu Z.A."/>
            <person name="Luros J.S."/>
            <person name="Maiti R."/>
            <person name="Marziali A."/>
            <person name="Militscher J."/>
            <person name="Miranda M."/>
            <person name="Nguyen M."/>
            <person name="Nierman W.C."/>
            <person name="Osborne B.I."/>
            <person name="Pai G."/>
            <person name="Peterson J."/>
            <person name="Pham P.K."/>
            <person name="Rizzo M."/>
            <person name="Rooney T."/>
            <person name="Rowley D."/>
            <person name="Sakano H."/>
            <person name="Salzberg S.L."/>
            <person name="Schwartz J.R."/>
            <person name="Shinn P."/>
            <person name="Southwick A.M."/>
            <person name="Sun H."/>
            <person name="Tallon L.J."/>
            <person name="Tambunga G."/>
            <person name="Toriumi M.J."/>
            <person name="Town C.D."/>
            <person name="Utterback T."/>
            <person name="Van Aken S."/>
            <person name="Vaysberg M."/>
            <person name="Vysotskaia V.S."/>
            <person name="Walker M."/>
            <person name="Wu D."/>
            <person name="Yu G."/>
            <person name="Fraser C.M."/>
            <person name="Venter J.C."/>
            <person name="Davis R.W."/>
        </authorList>
    </citation>
    <scope>NUCLEOTIDE SEQUENCE [LARGE SCALE GENOMIC DNA]</scope>
    <source>
        <strain>cv. Columbia</strain>
    </source>
</reference>
<reference key="4">
    <citation type="journal article" date="2017" name="Plant J.">
        <title>Araport11: a complete reannotation of the Arabidopsis thaliana reference genome.</title>
        <authorList>
            <person name="Cheng C.Y."/>
            <person name="Krishnakumar V."/>
            <person name="Chan A.P."/>
            <person name="Thibaud-Nissen F."/>
            <person name="Schobel S."/>
            <person name="Town C.D."/>
        </authorList>
    </citation>
    <scope>GENOME REANNOTATION</scope>
    <source>
        <strain>cv. Columbia</strain>
    </source>
</reference>
<reference key="5">
    <citation type="submission" date="2006-10" db="EMBL/GenBank/DDBJ databases">
        <title>Arabidopsis ORF clones.</title>
        <authorList>
            <person name="Quinitio C."/>
            <person name="Chen H."/>
            <person name="Kim C.J."/>
            <person name="Shinn P."/>
            <person name="Ecker J.R."/>
        </authorList>
    </citation>
    <scope>NUCLEOTIDE SEQUENCE [LARGE SCALE MRNA]</scope>
    <source>
        <strain>cv. Columbia</strain>
    </source>
</reference>
<reference key="6">
    <citation type="journal article" date="2004" name="Mol. Plant Pathol.">
        <title>Recent advance in the study of caspase-like proteases and Bax inhibitor-1 in plants: their possible roles as regulator of programmed cell death.</title>
        <authorList>
            <person name="Watanabe N."/>
            <person name="Lam E."/>
        </authorList>
    </citation>
    <scope>GENE FAMILY</scope>
</reference>
<reference key="7">
    <citation type="journal article" date="2011" name="Plant J.">
        <title>Arabidopsis metacaspase 2d is a positive mediator of cell death induced during biotic and abiotic stresses.</title>
        <authorList>
            <person name="Watanabe N."/>
            <person name="Lam E."/>
        </authorList>
    </citation>
    <scope>TISSUE SPECIFICITY</scope>
</reference>
<protein>
    <recommendedName>
        <fullName>Metacaspase-6</fullName>
        <shortName>AtMC6</shortName>
        <ecNumber>3.4.22.-</ecNumber>
    </recommendedName>
    <alternativeName>
        <fullName>Metacaspase 2c</fullName>
        <shortName>AtMCP2c</shortName>
    </alternativeName>
    <alternativeName>
        <fullName>Metacaspase-5</fullName>
    </alternativeName>
</protein>
<evidence type="ECO:0000250" key="1"/>
<evidence type="ECO:0000250" key="2">
    <source>
        <dbReference type="UniProtKB" id="Q9FYE1"/>
    </source>
</evidence>
<evidence type="ECO:0000256" key="3">
    <source>
        <dbReference type="SAM" id="MobiDB-lite"/>
    </source>
</evidence>
<evidence type="ECO:0000269" key="4">
    <source>
    </source>
</evidence>
<evidence type="ECO:0000305" key="5"/>
<feature type="chain" id="PRO_0000334604" description="Metacaspase-6">
    <location>
        <begin position="1"/>
        <end position="368"/>
    </location>
</feature>
<feature type="region of interest" description="Disordered" evidence="3">
    <location>
        <begin position="153"/>
        <end position="174"/>
    </location>
</feature>
<feature type="active site" evidence="1">
    <location>
        <position position="86"/>
    </location>
</feature>
<feature type="active site" evidence="1">
    <location>
        <position position="139"/>
    </location>
</feature>
<feature type="modified residue" description="S-nitrosocysteine" evidence="2">
    <location>
        <position position="139"/>
    </location>
</feature>
<comment type="tissue specificity">
    <text evidence="4">Expressed in roots and flower buds.</text>
</comment>
<comment type="PTM">
    <text>Proteolytically processed; by an autocatalytic mechanism.</text>
</comment>
<comment type="similarity">
    <text evidence="5">Belongs to the peptidase C14B family.</text>
</comment>
<sequence length="368" mass="40242">MAKKALLIGINYVGTKAELRGCVNDVRRMRISLVERYGFSEENIKMLIDTDSSSIKPTGKNIRQALLDLVEPAKSGDVLFVHYSGHGTRLPAETGEDDDTGYDECIVPSDMNLITDDDFRDLVDMVPKDCPITIISDSCHSGGLIDEAKEQIGESTKKKKDSGDSSTINKETEAEIIEVGNRSLPLETLIDMLKQETGNDDIEVGKIRTTLFDMFGDDSSPKVKKFMNVILSNLQETTTTIQTVSDEVLGSVENLAQEFLEQKLSDDVKPAIQDVYAGAINGALPDNGILISGCQTDQTSSDASPPGHPELAYGALTNAIQIIIGETKGKISNKDLVLKARKLLRKQGFDQRPGLYCNDAYVNARFIC</sequence>
<dbReference type="EC" id="3.4.22.-"/>
<dbReference type="EMBL" id="AY219831">
    <property type="protein sequence ID" value="AAP44519.1"/>
    <property type="molecule type" value="mRNA"/>
</dbReference>
<dbReference type="EMBL" id="AY322532">
    <property type="protein sequence ID" value="AAP84713.1"/>
    <property type="molecule type" value="mRNA"/>
</dbReference>
<dbReference type="EMBL" id="AC002986">
    <property type="protein sequence ID" value="AAC17078.1"/>
    <property type="molecule type" value="Genomic_DNA"/>
</dbReference>
<dbReference type="EMBL" id="CP002684">
    <property type="protein sequence ID" value="AEE36230.1"/>
    <property type="molecule type" value="Genomic_DNA"/>
</dbReference>
<dbReference type="EMBL" id="BT029232">
    <property type="protein sequence ID" value="ABJ98564.1"/>
    <property type="molecule type" value="mRNA"/>
</dbReference>
<dbReference type="PIR" id="T01023">
    <property type="entry name" value="T01023"/>
</dbReference>
<dbReference type="RefSeq" id="NP_178050.1">
    <property type="nucleotide sequence ID" value="NM_106580.2"/>
</dbReference>
<dbReference type="SMR" id="O64519"/>
<dbReference type="FunCoup" id="O64519">
    <property type="interactions" value="9"/>
</dbReference>
<dbReference type="STRING" id="3702.O64519"/>
<dbReference type="MEROPS" id="C14.A01"/>
<dbReference type="PaxDb" id="3702-AT1G79320.1"/>
<dbReference type="ProteomicsDB" id="238285"/>
<dbReference type="EnsemblPlants" id="AT1G79320.1">
    <property type="protein sequence ID" value="AT1G79320.1"/>
    <property type="gene ID" value="AT1G79320"/>
</dbReference>
<dbReference type="GeneID" id="844270"/>
<dbReference type="Gramene" id="AT1G79320.1">
    <property type="protein sequence ID" value="AT1G79320.1"/>
    <property type="gene ID" value="AT1G79320"/>
</dbReference>
<dbReference type="KEGG" id="ath:AT1G79320"/>
<dbReference type="Araport" id="AT1G79320"/>
<dbReference type="TAIR" id="AT1G79320">
    <property type="gene designation" value="MC6"/>
</dbReference>
<dbReference type="eggNOG" id="KOG1546">
    <property type="taxonomic scope" value="Eukaryota"/>
</dbReference>
<dbReference type="HOGENOM" id="CLU_029389_4_1_1"/>
<dbReference type="InParanoid" id="O64519"/>
<dbReference type="OMA" id="CPITIIS"/>
<dbReference type="OrthoDB" id="3223806at2759"/>
<dbReference type="PhylomeDB" id="O64519"/>
<dbReference type="PRO" id="PR:O64519"/>
<dbReference type="Proteomes" id="UP000006548">
    <property type="component" value="Chromosome 1"/>
</dbReference>
<dbReference type="ExpressionAtlas" id="O64519">
    <property type="expression patterns" value="baseline and differential"/>
</dbReference>
<dbReference type="GO" id="GO:0004197">
    <property type="term" value="F:cysteine-type endopeptidase activity"/>
    <property type="evidence" value="ECO:0007669"/>
    <property type="project" value="InterPro"/>
</dbReference>
<dbReference type="GO" id="GO:0006508">
    <property type="term" value="P:proteolysis"/>
    <property type="evidence" value="ECO:0007669"/>
    <property type="project" value="UniProtKB-KW"/>
</dbReference>
<dbReference type="Gene3D" id="3.40.50.12660">
    <property type="match status" value="2"/>
</dbReference>
<dbReference type="InterPro" id="IPR050452">
    <property type="entry name" value="Metacaspase"/>
</dbReference>
<dbReference type="InterPro" id="IPR011600">
    <property type="entry name" value="Pept_C14_caspase"/>
</dbReference>
<dbReference type="PANTHER" id="PTHR48104">
    <property type="entry name" value="METACASPASE-4"/>
    <property type="match status" value="1"/>
</dbReference>
<dbReference type="PANTHER" id="PTHR48104:SF20">
    <property type="entry name" value="METACASPASE-6"/>
    <property type="match status" value="1"/>
</dbReference>
<dbReference type="Pfam" id="PF00656">
    <property type="entry name" value="Peptidase_C14"/>
    <property type="match status" value="1"/>
</dbReference>